<keyword id="KW-0134">Cell wall</keyword>
<keyword id="KW-0378">Hydrolase</keyword>
<keyword id="KW-0443">Lipid metabolism</keyword>
<keyword id="KW-1185">Reference proteome</keyword>
<keyword id="KW-0677">Repeat</keyword>
<keyword id="KW-0964">Secreted</keyword>
<keyword id="KW-0719">Serine esterase</keyword>
<proteinExistence type="inferred from homology"/>
<comment type="function">
    <text evidence="1">Exhibits lipolytic activity with medium chain length esters as optimum substrates.</text>
</comment>
<comment type="catalytic activity">
    <reaction evidence="1">
        <text>a fatty acid ester + H2O = an aliphatic alcohol + a fatty acid + H(+)</text>
        <dbReference type="Rhea" id="RHEA:59388"/>
        <dbReference type="ChEBI" id="CHEBI:2571"/>
        <dbReference type="ChEBI" id="CHEBI:15377"/>
        <dbReference type="ChEBI" id="CHEBI:15378"/>
        <dbReference type="ChEBI" id="CHEBI:28868"/>
        <dbReference type="ChEBI" id="CHEBI:35748"/>
    </reaction>
</comment>
<comment type="subcellular location">
    <subcellularLocation>
        <location evidence="1">Secreted</location>
        <location evidence="1">Cell wall</location>
    </subcellularLocation>
    <text evidence="1">Cell wall anchored. Binds peptidoglycans via the LytM domains.</text>
</comment>
<comment type="domain">
    <text evidence="1">Contains an N-terminal LytE region, which consists of three consecutive LysM domains, and a C-terminal esterase domain. LytM domains are essential for anchoring protein to the cell wall.</text>
</comment>
<comment type="similarity">
    <text evidence="3">Belongs to the AB hydrolase superfamily.</text>
</comment>
<gene>
    <name type="ordered locus">MT1326</name>
</gene>
<accession>P9WM38</accession>
<accession>L0T8Y0</accession>
<accession>Q10614</accession>
<dbReference type="EC" id="3.1.1.-" evidence="1"/>
<dbReference type="EMBL" id="AE000516">
    <property type="protein sequence ID" value="AAK45587.1"/>
    <property type="molecule type" value="Genomic_DNA"/>
</dbReference>
<dbReference type="PIR" id="D70772">
    <property type="entry name" value="D70772"/>
</dbReference>
<dbReference type="RefSeq" id="WP_003406625.1">
    <property type="nucleotide sequence ID" value="NZ_KK341227.1"/>
</dbReference>
<dbReference type="SMR" id="P9WM38"/>
<dbReference type="CAZy" id="CBM50">
    <property type="family name" value="Carbohydrate-Binding Module Family 50"/>
</dbReference>
<dbReference type="ESTHER" id="myctu-yc88">
    <property type="family name" value="A85-Mycolyl-transferase"/>
</dbReference>
<dbReference type="KEGG" id="mtc:MT1326"/>
<dbReference type="PATRIC" id="fig|83331.31.peg.1432"/>
<dbReference type="HOGENOM" id="CLU_026624_2_0_11"/>
<dbReference type="Proteomes" id="UP000001020">
    <property type="component" value="Chromosome"/>
</dbReference>
<dbReference type="GO" id="GO:0005576">
    <property type="term" value="C:extracellular region"/>
    <property type="evidence" value="ECO:0007669"/>
    <property type="project" value="UniProtKB-KW"/>
</dbReference>
<dbReference type="GO" id="GO:0016747">
    <property type="term" value="F:acyltransferase activity, transferring groups other than amino-acyl groups"/>
    <property type="evidence" value="ECO:0007669"/>
    <property type="project" value="TreeGrafter"/>
</dbReference>
<dbReference type="GO" id="GO:0052689">
    <property type="term" value="F:carboxylic ester hydrolase activity"/>
    <property type="evidence" value="ECO:0007669"/>
    <property type="project" value="UniProtKB-KW"/>
</dbReference>
<dbReference type="GO" id="GO:0006629">
    <property type="term" value="P:lipid metabolic process"/>
    <property type="evidence" value="ECO:0007669"/>
    <property type="project" value="UniProtKB-KW"/>
</dbReference>
<dbReference type="CDD" id="cd00118">
    <property type="entry name" value="LysM"/>
    <property type="match status" value="2"/>
</dbReference>
<dbReference type="FunFam" id="3.40.50.1820:FF:000198">
    <property type="entry name" value="Putative esterase"/>
    <property type="match status" value="1"/>
</dbReference>
<dbReference type="Gene3D" id="3.40.50.1820">
    <property type="entry name" value="alpha/beta hydrolase"/>
    <property type="match status" value="1"/>
</dbReference>
<dbReference type="Gene3D" id="3.10.350.10">
    <property type="entry name" value="LysM domain"/>
    <property type="match status" value="3"/>
</dbReference>
<dbReference type="InterPro" id="IPR029058">
    <property type="entry name" value="AB_hydrolase_fold"/>
</dbReference>
<dbReference type="InterPro" id="IPR000801">
    <property type="entry name" value="Esterase-like"/>
</dbReference>
<dbReference type="InterPro" id="IPR018392">
    <property type="entry name" value="LysM_dom"/>
</dbReference>
<dbReference type="InterPro" id="IPR036779">
    <property type="entry name" value="LysM_dom_sf"/>
</dbReference>
<dbReference type="InterPro" id="IPR050583">
    <property type="entry name" value="Mycobacterial_A85_antigen"/>
</dbReference>
<dbReference type="PANTHER" id="PTHR48098:SF1">
    <property type="entry name" value="DIACYLGLYCEROL ACYLTRANSFERASE_MYCOLYLTRANSFERASE AG85A"/>
    <property type="match status" value="1"/>
</dbReference>
<dbReference type="PANTHER" id="PTHR48098">
    <property type="entry name" value="ENTEROCHELIN ESTERASE-RELATED"/>
    <property type="match status" value="1"/>
</dbReference>
<dbReference type="Pfam" id="PF00756">
    <property type="entry name" value="Esterase"/>
    <property type="match status" value="1"/>
</dbReference>
<dbReference type="Pfam" id="PF01476">
    <property type="entry name" value="LysM"/>
    <property type="match status" value="3"/>
</dbReference>
<dbReference type="SMART" id="SM00257">
    <property type="entry name" value="LysM"/>
    <property type="match status" value="3"/>
</dbReference>
<dbReference type="SUPFAM" id="SSF53474">
    <property type="entry name" value="alpha/beta-Hydrolases"/>
    <property type="match status" value="1"/>
</dbReference>
<dbReference type="SUPFAM" id="SSF54106">
    <property type="entry name" value="LysM domain"/>
    <property type="match status" value="1"/>
</dbReference>
<dbReference type="PROSITE" id="PS51782">
    <property type="entry name" value="LYSM"/>
    <property type="match status" value="3"/>
</dbReference>
<evidence type="ECO:0000250" key="1">
    <source>
        <dbReference type="UniProtKB" id="P9WM39"/>
    </source>
</evidence>
<evidence type="ECO:0000255" key="2">
    <source>
        <dbReference type="PROSITE-ProRule" id="PRU01118"/>
    </source>
</evidence>
<evidence type="ECO:0000305" key="3"/>
<sequence length="456" mass="49619">MVSTHAVVAGETLSALALRFYGDAELYRLIAAASGIADPDVVNVGQRLIMPDFTRYTVVAGDTLSALALRFYGDAELNWLIAAASGIADPDVVNVGQRLIMPDFTRYTVVAGDTLSALAARFYGDASLYPLIAAVNGIADPGVIDVGQVLVIFIGRSDGFGLRIVDRNENDPRLWYYRFQTSAIGWNPGVNVLLPDDYRTSGRTYPVLYLFHGGGTDQDFRTFDFLGIRDLTAGKPIIIVMPDGGHAGWYSNPVSSFVGPRNWETFHIAQLLPWIEANFRTYAEYDGRAVAGFSMGGFGALKYAAKYYGHFASASSHSGPASLRRDFGLVVHWANLSSAVLDLGGGTVYGAPLWDQARVSADNPVERIDSYRNKRIFLVAGTSPDPANWFDSVNETQVLAGQREFRERLSNAGIPHESHEVPGGHVFRPDMFRLDLDGIVARLRPASIGAAAERAD</sequence>
<name>ESTR_MYCTO</name>
<reference key="1">
    <citation type="journal article" date="2002" name="J. Bacteriol.">
        <title>Whole-genome comparison of Mycobacterium tuberculosis clinical and laboratory strains.</title>
        <authorList>
            <person name="Fleischmann R.D."/>
            <person name="Alland D."/>
            <person name="Eisen J.A."/>
            <person name="Carpenter L."/>
            <person name="White O."/>
            <person name="Peterson J.D."/>
            <person name="DeBoy R.T."/>
            <person name="Dodson R.J."/>
            <person name="Gwinn M.L."/>
            <person name="Haft D.H."/>
            <person name="Hickey E.K."/>
            <person name="Kolonay J.F."/>
            <person name="Nelson W.C."/>
            <person name="Umayam L.A."/>
            <person name="Ermolaeva M.D."/>
            <person name="Salzberg S.L."/>
            <person name="Delcher A."/>
            <person name="Utterback T.R."/>
            <person name="Weidman J.F."/>
            <person name="Khouri H.M."/>
            <person name="Gill J."/>
            <person name="Mikula A."/>
            <person name="Bishai W."/>
            <person name="Jacobs W.R. Jr."/>
            <person name="Venter J.C."/>
            <person name="Fraser C.M."/>
        </authorList>
    </citation>
    <scope>NUCLEOTIDE SEQUENCE [LARGE SCALE GENOMIC DNA]</scope>
    <source>
        <strain>CDC 1551 / Oshkosh</strain>
    </source>
</reference>
<protein>
    <recommendedName>
        <fullName evidence="1">Esterase MT1326</fullName>
        <ecNumber evidence="1">3.1.1.-</ecNumber>
    </recommendedName>
</protein>
<organism>
    <name type="scientific">Mycobacterium tuberculosis (strain CDC 1551 / Oshkosh)</name>
    <dbReference type="NCBI Taxonomy" id="83331"/>
    <lineage>
        <taxon>Bacteria</taxon>
        <taxon>Bacillati</taxon>
        <taxon>Actinomycetota</taxon>
        <taxon>Actinomycetes</taxon>
        <taxon>Mycobacteriales</taxon>
        <taxon>Mycobacteriaceae</taxon>
        <taxon>Mycobacterium</taxon>
        <taxon>Mycobacterium tuberculosis complex</taxon>
    </lineage>
</organism>
<feature type="chain" id="PRO_0000427371" description="Esterase MT1326">
    <location>
        <begin position="1"/>
        <end position="456"/>
    </location>
</feature>
<feature type="domain" description="LysM 1" evidence="2">
    <location>
        <begin position="3"/>
        <end position="50"/>
    </location>
</feature>
<feature type="domain" description="LysM 2" evidence="2">
    <location>
        <begin position="54"/>
        <end position="101"/>
    </location>
</feature>
<feature type="domain" description="LysM 3" evidence="2">
    <location>
        <begin position="105"/>
        <end position="152"/>
    </location>
</feature>
<feature type="active site" evidence="1">
    <location>
        <position position="294"/>
    </location>
</feature>
<feature type="active site" evidence="1">
    <location>
        <position position="391"/>
    </location>
</feature>
<feature type="active site" evidence="1">
    <location>
        <position position="425"/>
    </location>
</feature>